<protein>
    <recommendedName>
        <fullName>AT-rich interactive domain-containing protein 4</fullName>
        <shortName>ARID domain-containing protein 4</shortName>
    </recommendedName>
</protein>
<keyword id="KW-0002">3D-structure</keyword>
<keyword id="KW-0238">DNA-binding</keyword>
<keyword id="KW-0479">Metal-binding</keyword>
<keyword id="KW-0539">Nucleus</keyword>
<keyword id="KW-1185">Reference proteome</keyword>
<keyword id="KW-0804">Transcription</keyword>
<keyword id="KW-0805">Transcription regulation</keyword>
<keyword id="KW-0862">Zinc</keyword>
<keyword id="KW-0863">Zinc-finger</keyword>
<accession>Q6NQ79</accession>
<accession>Q9LXL0</accession>
<gene>
    <name type="primary">ARID4</name>
    <name type="ordered locus">At3g43240</name>
    <name type="ORF">F7K15.90</name>
</gene>
<comment type="subcellular location">
    <subcellularLocation>
        <location evidence="1">Nucleus</location>
    </subcellularLocation>
</comment>
<comment type="sequence caution" evidence="3">
    <conflict type="erroneous gene model prediction">
        <sequence resource="EMBL-CDS" id="CAB89045"/>
    </conflict>
</comment>
<dbReference type="EMBL" id="AL353871">
    <property type="protein sequence ID" value="CAB89045.1"/>
    <property type="status" value="ALT_SEQ"/>
    <property type="molecule type" value="Genomic_DNA"/>
</dbReference>
<dbReference type="EMBL" id="CP002686">
    <property type="protein sequence ID" value="AEE77778.1"/>
    <property type="molecule type" value="Genomic_DNA"/>
</dbReference>
<dbReference type="EMBL" id="BT010580">
    <property type="protein sequence ID" value="AAQ82841.1"/>
    <property type="molecule type" value="mRNA"/>
</dbReference>
<dbReference type="PIR" id="T49238">
    <property type="entry name" value="T49238"/>
</dbReference>
<dbReference type="RefSeq" id="NP_189910.2">
    <property type="nucleotide sequence ID" value="NM_114192.4"/>
</dbReference>
<dbReference type="PDB" id="6LQE">
    <property type="method" value="X-ray"/>
    <property type="resolution" value="1.90 A"/>
    <property type="chains" value="A=673-747"/>
</dbReference>
<dbReference type="PDB" id="6LQF">
    <property type="method" value="X-ray"/>
    <property type="resolution" value="1.50 A"/>
    <property type="chains" value="A=545-747"/>
</dbReference>
<dbReference type="PDBsum" id="6LQE"/>
<dbReference type="PDBsum" id="6LQF"/>
<dbReference type="SMR" id="Q6NQ79"/>
<dbReference type="BioGRID" id="8721">
    <property type="interactions" value="5"/>
</dbReference>
<dbReference type="FunCoup" id="Q6NQ79">
    <property type="interactions" value="2701"/>
</dbReference>
<dbReference type="IntAct" id="Q6NQ79">
    <property type="interactions" value="5"/>
</dbReference>
<dbReference type="STRING" id="3702.Q6NQ79"/>
<dbReference type="iPTMnet" id="Q6NQ79"/>
<dbReference type="PaxDb" id="3702-AT3G43240.1"/>
<dbReference type="ProteomicsDB" id="246601"/>
<dbReference type="EnsemblPlants" id="AT3G43240.1">
    <property type="protein sequence ID" value="AT3G43240.1"/>
    <property type="gene ID" value="AT3G43240"/>
</dbReference>
<dbReference type="GeneID" id="823399"/>
<dbReference type="Gramene" id="AT3G43240.1">
    <property type="protein sequence ID" value="AT3G43240.1"/>
    <property type="gene ID" value="AT3G43240"/>
</dbReference>
<dbReference type="KEGG" id="ath:AT3G43240"/>
<dbReference type="Araport" id="AT3G43240"/>
<dbReference type="TAIR" id="AT3G43240"/>
<dbReference type="eggNOG" id="ENOG502QQP4">
    <property type="taxonomic scope" value="Eukaryota"/>
</dbReference>
<dbReference type="HOGENOM" id="CLU_012244_1_0_1"/>
<dbReference type="InParanoid" id="Q6NQ79"/>
<dbReference type="OMA" id="SCGEWAH"/>
<dbReference type="PhylomeDB" id="Q6NQ79"/>
<dbReference type="PRO" id="PR:Q6NQ79"/>
<dbReference type="Proteomes" id="UP000006548">
    <property type="component" value="Chromosome 3"/>
</dbReference>
<dbReference type="ExpressionAtlas" id="Q6NQ79">
    <property type="expression patterns" value="baseline and differential"/>
</dbReference>
<dbReference type="GO" id="GO:0005634">
    <property type="term" value="C:nucleus"/>
    <property type="evidence" value="ECO:0007669"/>
    <property type="project" value="UniProtKB-SubCell"/>
</dbReference>
<dbReference type="GO" id="GO:0003677">
    <property type="term" value="F:DNA binding"/>
    <property type="evidence" value="ECO:0007669"/>
    <property type="project" value="UniProtKB-KW"/>
</dbReference>
<dbReference type="GO" id="GO:0008270">
    <property type="term" value="F:zinc ion binding"/>
    <property type="evidence" value="ECO:0007669"/>
    <property type="project" value="UniProtKB-KW"/>
</dbReference>
<dbReference type="CDD" id="cd16100">
    <property type="entry name" value="ARID"/>
    <property type="match status" value="1"/>
</dbReference>
<dbReference type="CDD" id="cd15615">
    <property type="entry name" value="PHD_ARID4_like"/>
    <property type="match status" value="1"/>
</dbReference>
<dbReference type="Gene3D" id="1.10.150.60">
    <property type="entry name" value="ARID DNA-binding domain"/>
    <property type="match status" value="1"/>
</dbReference>
<dbReference type="Gene3D" id="3.30.40.10">
    <property type="entry name" value="Zinc/RING finger domain, C3HC4 (zinc finger)"/>
    <property type="match status" value="1"/>
</dbReference>
<dbReference type="InterPro" id="IPR042293">
    <property type="entry name" value="ARID4"/>
</dbReference>
<dbReference type="InterPro" id="IPR001606">
    <property type="entry name" value="ARID_dom"/>
</dbReference>
<dbReference type="InterPro" id="IPR036431">
    <property type="entry name" value="ARID_dom_sf"/>
</dbReference>
<dbReference type="InterPro" id="IPR011011">
    <property type="entry name" value="Znf_FYVE_PHD"/>
</dbReference>
<dbReference type="InterPro" id="IPR001965">
    <property type="entry name" value="Znf_PHD"/>
</dbReference>
<dbReference type="InterPro" id="IPR013083">
    <property type="entry name" value="Znf_RING/FYVE/PHD"/>
</dbReference>
<dbReference type="PANTHER" id="PTHR46694">
    <property type="entry name" value="AT-RICH INTERACTIVE DOMAIN-CONTAINING PROTEIN 4"/>
    <property type="match status" value="1"/>
</dbReference>
<dbReference type="PANTHER" id="PTHR46694:SF1">
    <property type="entry name" value="AT-RICH INTERACTIVE DOMAIN-CONTAINING PROTEIN 4"/>
    <property type="match status" value="1"/>
</dbReference>
<dbReference type="Pfam" id="PF01388">
    <property type="entry name" value="ARID"/>
    <property type="match status" value="1"/>
</dbReference>
<dbReference type="SMART" id="SM01014">
    <property type="entry name" value="ARID"/>
    <property type="match status" value="1"/>
</dbReference>
<dbReference type="SMART" id="SM00501">
    <property type="entry name" value="BRIGHT"/>
    <property type="match status" value="1"/>
</dbReference>
<dbReference type="SMART" id="SM00249">
    <property type="entry name" value="PHD"/>
    <property type="match status" value="1"/>
</dbReference>
<dbReference type="SUPFAM" id="SSF46774">
    <property type="entry name" value="ARID-like"/>
    <property type="match status" value="1"/>
</dbReference>
<dbReference type="SUPFAM" id="SSF57903">
    <property type="entry name" value="FYVE/PHD zinc finger"/>
    <property type="match status" value="1"/>
</dbReference>
<dbReference type="PROSITE" id="PS51011">
    <property type="entry name" value="ARID"/>
    <property type="match status" value="1"/>
</dbReference>
<reference key="1">
    <citation type="journal article" date="2000" name="Nature">
        <title>Sequence and analysis of chromosome 3 of the plant Arabidopsis thaliana.</title>
        <authorList>
            <person name="Salanoubat M."/>
            <person name="Lemcke K."/>
            <person name="Rieger M."/>
            <person name="Ansorge W."/>
            <person name="Unseld M."/>
            <person name="Fartmann B."/>
            <person name="Valle G."/>
            <person name="Bloecker H."/>
            <person name="Perez-Alonso M."/>
            <person name="Obermaier B."/>
            <person name="Delseny M."/>
            <person name="Boutry M."/>
            <person name="Grivell L.A."/>
            <person name="Mache R."/>
            <person name="Puigdomenech P."/>
            <person name="De Simone V."/>
            <person name="Choisne N."/>
            <person name="Artiguenave F."/>
            <person name="Robert C."/>
            <person name="Brottier P."/>
            <person name="Wincker P."/>
            <person name="Cattolico L."/>
            <person name="Weissenbach J."/>
            <person name="Saurin W."/>
            <person name="Quetier F."/>
            <person name="Schaefer M."/>
            <person name="Mueller-Auer S."/>
            <person name="Gabel C."/>
            <person name="Fuchs M."/>
            <person name="Benes V."/>
            <person name="Wurmbach E."/>
            <person name="Drzonek H."/>
            <person name="Erfle H."/>
            <person name="Jordan N."/>
            <person name="Bangert S."/>
            <person name="Wiedelmann R."/>
            <person name="Kranz H."/>
            <person name="Voss H."/>
            <person name="Holland R."/>
            <person name="Brandt P."/>
            <person name="Nyakatura G."/>
            <person name="Vezzi A."/>
            <person name="D'Angelo M."/>
            <person name="Pallavicini A."/>
            <person name="Toppo S."/>
            <person name="Simionati B."/>
            <person name="Conrad A."/>
            <person name="Hornischer K."/>
            <person name="Kauer G."/>
            <person name="Loehnert T.-H."/>
            <person name="Nordsiek G."/>
            <person name="Reichelt J."/>
            <person name="Scharfe M."/>
            <person name="Schoen O."/>
            <person name="Bargues M."/>
            <person name="Terol J."/>
            <person name="Climent J."/>
            <person name="Navarro P."/>
            <person name="Collado C."/>
            <person name="Perez-Perez A."/>
            <person name="Ottenwaelder B."/>
            <person name="Duchemin D."/>
            <person name="Cooke R."/>
            <person name="Laudie M."/>
            <person name="Berger-Llauro C."/>
            <person name="Purnelle B."/>
            <person name="Masuy D."/>
            <person name="de Haan M."/>
            <person name="Maarse A.C."/>
            <person name="Alcaraz J.-P."/>
            <person name="Cottet A."/>
            <person name="Casacuberta E."/>
            <person name="Monfort A."/>
            <person name="Argiriou A."/>
            <person name="Flores M."/>
            <person name="Liguori R."/>
            <person name="Vitale D."/>
            <person name="Mannhaupt G."/>
            <person name="Haase D."/>
            <person name="Schoof H."/>
            <person name="Rudd S."/>
            <person name="Zaccaria P."/>
            <person name="Mewes H.-W."/>
            <person name="Mayer K.F.X."/>
            <person name="Kaul S."/>
            <person name="Town C.D."/>
            <person name="Koo H.L."/>
            <person name="Tallon L.J."/>
            <person name="Jenkins J."/>
            <person name="Rooney T."/>
            <person name="Rizzo M."/>
            <person name="Walts A."/>
            <person name="Utterback T."/>
            <person name="Fujii C.Y."/>
            <person name="Shea T.P."/>
            <person name="Creasy T.H."/>
            <person name="Haas B."/>
            <person name="Maiti R."/>
            <person name="Wu D."/>
            <person name="Peterson J."/>
            <person name="Van Aken S."/>
            <person name="Pai G."/>
            <person name="Militscher J."/>
            <person name="Sellers P."/>
            <person name="Gill J.E."/>
            <person name="Feldblyum T.V."/>
            <person name="Preuss D."/>
            <person name="Lin X."/>
            <person name="Nierman W.C."/>
            <person name="Salzberg S.L."/>
            <person name="White O."/>
            <person name="Venter J.C."/>
            <person name="Fraser C.M."/>
            <person name="Kaneko T."/>
            <person name="Nakamura Y."/>
            <person name="Sato S."/>
            <person name="Kato T."/>
            <person name="Asamizu E."/>
            <person name="Sasamoto S."/>
            <person name="Kimura T."/>
            <person name="Idesawa K."/>
            <person name="Kawashima K."/>
            <person name="Kishida Y."/>
            <person name="Kiyokawa C."/>
            <person name="Kohara M."/>
            <person name="Matsumoto M."/>
            <person name="Matsuno A."/>
            <person name="Muraki A."/>
            <person name="Nakayama S."/>
            <person name="Nakazaki N."/>
            <person name="Shinpo S."/>
            <person name="Takeuchi C."/>
            <person name="Wada T."/>
            <person name="Watanabe A."/>
            <person name="Yamada M."/>
            <person name="Yasuda M."/>
            <person name="Tabata S."/>
        </authorList>
    </citation>
    <scope>NUCLEOTIDE SEQUENCE [LARGE SCALE GENOMIC DNA]</scope>
    <source>
        <strain>cv. Columbia</strain>
    </source>
</reference>
<reference key="2">
    <citation type="journal article" date="2017" name="Plant J.">
        <title>Araport11: a complete reannotation of the Arabidopsis thaliana reference genome.</title>
        <authorList>
            <person name="Cheng C.Y."/>
            <person name="Krishnakumar V."/>
            <person name="Chan A.P."/>
            <person name="Thibaud-Nissen F."/>
            <person name="Schobel S."/>
            <person name="Town C.D."/>
        </authorList>
    </citation>
    <scope>GENOME REANNOTATION</scope>
    <source>
        <strain>cv. Columbia</strain>
    </source>
</reference>
<reference key="3">
    <citation type="submission" date="2003-09" db="EMBL/GenBank/DDBJ databases">
        <title>Arabidopsis ORF clones.</title>
        <authorList>
            <person name="Shinn P."/>
            <person name="Chen H."/>
            <person name="Cheuk R.F."/>
            <person name="Kim C.J."/>
            <person name="Carninci P."/>
            <person name="Hayashizaki Y."/>
            <person name="Ishida J."/>
            <person name="Kamiya A."/>
            <person name="Kawai J."/>
            <person name="Narusaka M."/>
            <person name="Sakurai T."/>
            <person name="Satou M."/>
            <person name="Seki M."/>
            <person name="Shinozaki K."/>
            <person name="Ecker J.R."/>
        </authorList>
    </citation>
    <scope>NUCLEOTIDE SEQUENCE [LARGE SCALE MRNA]</scope>
    <source>
        <strain>cv. Columbia</strain>
    </source>
</reference>
<sequence length="747" mass="82567">MFHGQGFSRNRCNVVAVVSGAELCDTNNQIDGTSHQPKYPFPDLSSSGRLKFQVLNNPTPEEFQVAVNSSATDFVYLQGEHSGDSDEVGPLVLGYTDFSTPDALVTLFGSTLPTTVYLELPNGEELAQALYSKGVQYVIYWKNVFSKYAACHFRHSLFSVIQSSCSDTWDVFHVAEASFRLYCTSDNAVLPSNSNRKMNYEMGPCLLGEPPKIDVVSPEADELEEENSLESLPSIKIYDEDVTVRFLLCGPPCTVDTFLLGSLMDGLNALLRIEMRGSKLHNRSSAPAPPLQAGTFTRGVVTMRCDVSTCSSAHISMLVSGNAQTCFSDQLLENHIKHEVVEKIQLVHSVVNSEETKRGFSEPRRSASIACGASVCEVSMQVPTWALQVLRQLAPDVSYRSLVVLGVASIQGLSVASFEKDDAERLLFFCGQQINDTSNHDALLSKIPNWLTPPLPTRKRSEPCRESKEIENGGPTSRKINVAALRPIPHTRRHKMIPFSGYSEIGRFDGDHTKGSLPMPPKHGASGGTPVTHRKAFSGSYQRKQIISLNPLPLKKHDCGRAHIQVCSEEEFLRDVMQFLLIRGHTRLVPPGGLAEFPDAVLNSKRLDLFNLYREVVSRGGFHVGNGINWKGQVFSKMRNHTLTNRMTGVGNTLKRHYETYLLEYEYAHDDVDGECCLICRSSTAGDWVNCGSCGEWAHFGCDRRPGLGAFKDYAKTDGLEYVCPNCSVSNYRKKSQKTSNGGLLVP</sequence>
<organism>
    <name type="scientific">Arabidopsis thaliana</name>
    <name type="common">Mouse-ear cress</name>
    <dbReference type="NCBI Taxonomy" id="3702"/>
    <lineage>
        <taxon>Eukaryota</taxon>
        <taxon>Viridiplantae</taxon>
        <taxon>Streptophyta</taxon>
        <taxon>Embryophyta</taxon>
        <taxon>Tracheophyta</taxon>
        <taxon>Spermatophyta</taxon>
        <taxon>Magnoliopsida</taxon>
        <taxon>eudicotyledons</taxon>
        <taxon>Gunneridae</taxon>
        <taxon>Pentapetalae</taxon>
        <taxon>rosids</taxon>
        <taxon>malvids</taxon>
        <taxon>Brassicales</taxon>
        <taxon>Brassicaceae</taxon>
        <taxon>Camelineae</taxon>
        <taxon>Arabidopsis</taxon>
    </lineage>
</organism>
<feature type="chain" id="PRO_0000413212" description="AT-rich interactive domain-containing protein 4">
    <location>
        <begin position="1"/>
        <end position="747"/>
    </location>
</feature>
<feature type="domain" description="ARID" evidence="1">
    <location>
        <begin position="566"/>
        <end position="670"/>
    </location>
</feature>
<feature type="zinc finger region" description="PHD-type">
    <location>
        <begin position="674"/>
        <end position="730"/>
    </location>
</feature>
<feature type="region of interest" description="Disordered" evidence="2">
    <location>
        <begin position="454"/>
        <end position="475"/>
    </location>
</feature>
<feature type="compositionally biased region" description="Basic and acidic residues" evidence="2">
    <location>
        <begin position="459"/>
        <end position="471"/>
    </location>
</feature>
<feature type="turn" evidence="4">
    <location>
        <begin position="564"/>
        <end position="566"/>
    </location>
</feature>
<feature type="helix" evidence="4">
    <location>
        <begin position="569"/>
        <end position="582"/>
    </location>
</feature>
<feature type="helix" evidence="4">
    <location>
        <begin position="586"/>
        <end position="588"/>
    </location>
</feature>
<feature type="helix" evidence="4">
    <location>
        <begin position="593"/>
        <end position="596"/>
    </location>
</feature>
<feature type="helix" evidence="4">
    <location>
        <begin position="609"/>
        <end position="617"/>
    </location>
</feature>
<feature type="turn" evidence="4">
    <location>
        <begin position="618"/>
        <end position="620"/>
    </location>
</feature>
<feature type="helix" evidence="4">
    <location>
        <begin position="622"/>
        <end position="627"/>
    </location>
</feature>
<feature type="helix" evidence="4">
    <location>
        <begin position="630"/>
        <end position="633"/>
    </location>
</feature>
<feature type="helix" evidence="4">
    <location>
        <begin position="635"/>
        <end position="637"/>
    </location>
</feature>
<feature type="helix" evidence="4">
    <location>
        <begin position="650"/>
        <end position="661"/>
    </location>
</feature>
<feature type="helix" evidence="4">
    <location>
        <begin position="663"/>
        <end position="667"/>
    </location>
</feature>
<feature type="turn" evidence="4">
    <location>
        <begin position="678"/>
        <end position="680"/>
    </location>
</feature>
<feature type="strand" evidence="4">
    <location>
        <begin position="685"/>
        <end position="690"/>
    </location>
</feature>
<feature type="turn" evidence="4">
    <location>
        <begin position="692"/>
        <end position="694"/>
    </location>
</feature>
<feature type="strand" evidence="4">
    <location>
        <begin position="697"/>
        <end position="699"/>
    </location>
</feature>
<feature type="helix" evidence="4">
    <location>
        <begin position="700"/>
        <end position="702"/>
    </location>
</feature>
<feature type="helix" evidence="4">
    <location>
        <begin position="711"/>
        <end position="715"/>
    </location>
</feature>
<feature type="turn" evidence="4">
    <location>
        <begin position="725"/>
        <end position="727"/>
    </location>
</feature>
<proteinExistence type="evidence at protein level"/>
<name>ARID4_ARATH</name>
<evidence type="ECO:0000255" key="1">
    <source>
        <dbReference type="PROSITE-ProRule" id="PRU00355"/>
    </source>
</evidence>
<evidence type="ECO:0000256" key="2">
    <source>
        <dbReference type="SAM" id="MobiDB-lite"/>
    </source>
</evidence>
<evidence type="ECO:0000305" key="3"/>
<evidence type="ECO:0007829" key="4">
    <source>
        <dbReference type="PDB" id="6LQF"/>
    </source>
</evidence>